<organism>
    <name type="scientific">Shewanella violacea (strain JCM 10179 / CIP 106290 / LMG 19151 / DSS12)</name>
    <dbReference type="NCBI Taxonomy" id="637905"/>
    <lineage>
        <taxon>Bacteria</taxon>
        <taxon>Pseudomonadati</taxon>
        <taxon>Pseudomonadota</taxon>
        <taxon>Gammaproteobacteria</taxon>
        <taxon>Alteromonadales</taxon>
        <taxon>Shewanellaceae</taxon>
        <taxon>Shewanella</taxon>
    </lineage>
</organism>
<accession>Q56733</accession>
<accession>D4ZMF2</accession>
<name>PDXB_SHEVD</name>
<protein>
    <recommendedName>
        <fullName evidence="1">Erythronate-4-phosphate dehydrogenase</fullName>
        <ecNumber evidence="1">1.1.1.290</ecNumber>
    </recommendedName>
</protein>
<dbReference type="EC" id="1.1.1.290" evidence="1"/>
<dbReference type="EMBL" id="AP011177">
    <property type="protein sequence ID" value="BAJ02851.1"/>
    <property type="molecule type" value="Genomic_DNA"/>
</dbReference>
<dbReference type="EMBL" id="D49540">
    <property type="protein sequence ID" value="BAA08489.1"/>
    <property type="molecule type" value="Genomic_DNA"/>
</dbReference>
<dbReference type="RefSeq" id="WP_013052150.1">
    <property type="nucleotide sequence ID" value="NC_014012.1"/>
</dbReference>
<dbReference type="SMR" id="Q56733"/>
<dbReference type="STRING" id="637905.SVI_2880"/>
<dbReference type="KEGG" id="svo:SVI_2880"/>
<dbReference type="eggNOG" id="COG0111">
    <property type="taxonomic scope" value="Bacteria"/>
</dbReference>
<dbReference type="HOGENOM" id="CLU_019796_4_0_6"/>
<dbReference type="OrthoDB" id="9770208at2"/>
<dbReference type="UniPathway" id="UPA00244">
    <property type="reaction ID" value="UER00310"/>
</dbReference>
<dbReference type="Proteomes" id="UP000002350">
    <property type="component" value="Chromosome"/>
</dbReference>
<dbReference type="GO" id="GO:0005829">
    <property type="term" value="C:cytosol"/>
    <property type="evidence" value="ECO:0007669"/>
    <property type="project" value="TreeGrafter"/>
</dbReference>
<dbReference type="GO" id="GO:0033711">
    <property type="term" value="F:4-phosphoerythronate dehydrogenase activity"/>
    <property type="evidence" value="ECO:0007669"/>
    <property type="project" value="UniProtKB-EC"/>
</dbReference>
<dbReference type="GO" id="GO:0030267">
    <property type="term" value="F:glyoxylate reductase (NADPH) activity"/>
    <property type="evidence" value="ECO:0007669"/>
    <property type="project" value="TreeGrafter"/>
</dbReference>
<dbReference type="GO" id="GO:0016618">
    <property type="term" value="F:hydroxypyruvate reductase [NAD(P)H] activity"/>
    <property type="evidence" value="ECO:0007669"/>
    <property type="project" value="TreeGrafter"/>
</dbReference>
<dbReference type="GO" id="GO:0051287">
    <property type="term" value="F:NAD binding"/>
    <property type="evidence" value="ECO:0007669"/>
    <property type="project" value="InterPro"/>
</dbReference>
<dbReference type="GO" id="GO:0046983">
    <property type="term" value="F:protein dimerization activity"/>
    <property type="evidence" value="ECO:0007669"/>
    <property type="project" value="InterPro"/>
</dbReference>
<dbReference type="GO" id="GO:0008615">
    <property type="term" value="P:pyridoxine biosynthetic process"/>
    <property type="evidence" value="ECO:0007669"/>
    <property type="project" value="UniProtKB-UniRule"/>
</dbReference>
<dbReference type="CDD" id="cd12158">
    <property type="entry name" value="ErythrP_dh"/>
    <property type="match status" value="1"/>
</dbReference>
<dbReference type="Gene3D" id="3.30.1370.170">
    <property type="match status" value="1"/>
</dbReference>
<dbReference type="Gene3D" id="3.40.50.720">
    <property type="entry name" value="NAD(P)-binding Rossmann-like Domain"/>
    <property type="match status" value="2"/>
</dbReference>
<dbReference type="HAMAP" id="MF_01825">
    <property type="entry name" value="PdxB"/>
    <property type="match status" value="1"/>
</dbReference>
<dbReference type="InterPro" id="IPR050223">
    <property type="entry name" value="D-isomer_2-hydroxyacid_DH"/>
</dbReference>
<dbReference type="InterPro" id="IPR006139">
    <property type="entry name" value="D-isomer_2_OHA_DH_cat_dom"/>
</dbReference>
<dbReference type="InterPro" id="IPR029753">
    <property type="entry name" value="D-isomer_DH_CS"/>
</dbReference>
<dbReference type="InterPro" id="IPR006140">
    <property type="entry name" value="D-isomer_DH_NAD-bd"/>
</dbReference>
<dbReference type="InterPro" id="IPR020921">
    <property type="entry name" value="Erythronate-4-P_DHase"/>
</dbReference>
<dbReference type="InterPro" id="IPR024531">
    <property type="entry name" value="Erythronate-4-P_DHase_dimer"/>
</dbReference>
<dbReference type="InterPro" id="IPR036291">
    <property type="entry name" value="NAD(P)-bd_dom_sf"/>
</dbReference>
<dbReference type="InterPro" id="IPR038251">
    <property type="entry name" value="PdxB_dimer_sf"/>
</dbReference>
<dbReference type="PANTHER" id="PTHR10996:SF178">
    <property type="entry name" value="2-HYDROXYACID DEHYDROGENASE YGL185C-RELATED"/>
    <property type="match status" value="1"/>
</dbReference>
<dbReference type="PANTHER" id="PTHR10996">
    <property type="entry name" value="2-HYDROXYACID DEHYDROGENASE-RELATED"/>
    <property type="match status" value="1"/>
</dbReference>
<dbReference type="Pfam" id="PF00389">
    <property type="entry name" value="2-Hacid_dh"/>
    <property type="match status" value="1"/>
</dbReference>
<dbReference type="Pfam" id="PF02826">
    <property type="entry name" value="2-Hacid_dh_C"/>
    <property type="match status" value="1"/>
</dbReference>
<dbReference type="Pfam" id="PF11890">
    <property type="entry name" value="DUF3410"/>
    <property type="match status" value="1"/>
</dbReference>
<dbReference type="SUPFAM" id="SSF52283">
    <property type="entry name" value="Formate/glycerate dehydrogenase catalytic domain-like"/>
    <property type="match status" value="1"/>
</dbReference>
<dbReference type="SUPFAM" id="SSF51735">
    <property type="entry name" value="NAD(P)-binding Rossmann-fold domains"/>
    <property type="match status" value="1"/>
</dbReference>
<dbReference type="PROSITE" id="PS00671">
    <property type="entry name" value="D_2_HYDROXYACID_DH_3"/>
    <property type="match status" value="1"/>
</dbReference>
<keyword id="KW-0963">Cytoplasm</keyword>
<keyword id="KW-0520">NAD</keyword>
<keyword id="KW-0560">Oxidoreductase</keyword>
<keyword id="KW-0664">Pyridoxine biosynthesis</keyword>
<keyword id="KW-1185">Reference proteome</keyword>
<evidence type="ECO:0000255" key="1">
    <source>
        <dbReference type="HAMAP-Rule" id="MF_01825"/>
    </source>
</evidence>
<evidence type="ECO:0000305" key="2"/>
<reference key="1">
    <citation type="journal article" date="2010" name="Mol. Biosyst.">
        <title>Complete genome sequence and comparative analysis of Shewanella violacea, a psychrophilic and piezophilic bacterium from deep sea floor sediments.</title>
        <authorList>
            <person name="Aono E."/>
            <person name="Baba T."/>
            <person name="Ara T."/>
            <person name="Nishi T."/>
            <person name="Nakamichi T."/>
            <person name="Inamoto E."/>
            <person name="Toyonaga H."/>
            <person name="Hasegawa M."/>
            <person name="Takai Y."/>
            <person name="Okumura Y."/>
            <person name="Baba M."/>
            <person name="Tomita M."/>
            <person name="Kato C."/>
            <person name="Oshima T."/>
            <person name="Nakasone K."/>
            <person name="Mori H."/>
        </authorList>
    </citation>
    <scope>NUCLEOTIDE SEQUENCE [LARGE SCALE GENOMIC DNA]</scope>
    <source>
        <strain>JCM 10179 / CIP 106290 / LMG 19151 / DSS12</strain>
    </source>
</reference>
<reference key="2">
    <citation type="journal article" date="1997" name="J. Biochem.">
        <title>Comparison of the gene expression of aspartate beta-D-semialdehyde dehydrogenase at elevated hydrostatic pressure in deep-sea bacteria.</title>
        <authorList>
            <person name="Kato C."/>
            <person name="Smorawinska M."/>
            <person name="Li L."/>
            <person name="Horikoshi K."/>
        </authorList>
    </citation>
    <scope>NUCLEOTIDE SEQUENCE [GENOMIC DNA] OF 114-387</scope>
</reference>
<gene>
    <name evidence="1" type="primary">pdxB</name>
    <name type="ordered locus">SVI_2880</name>
</gene>
<proteinExistence type="inferred from homology"/>
<comment type="function">
    <text evidence="1">Catalyzes the oxidation of erythronate-4-phosphate to 3-hydroxy-2-oxo-4-phosphonooxybutanoate.</text>
</comment>
<comment type="catalytic activity">
    <reaction evidence="1">
        <text>4-phospho-D-erythronate + NAD(+) = (R)-3-hydroxy-2-oxo-4-phosphooxybutanoate + NADH + H(+)</text>
        <dbReference type="Rhea" id="RHEA:18829"/>
        <dbReference type="ChEBI" id="CHEBI:15378"/>
        <dbReference type="ChEBI" id="CHEBI:57540"/>
        <dbReference type="ChEBI" id="CHEBI:57945"/>
        <dbReference type="ChEBI" id="CHEBI:58538"/>
        <dbReference type="ChEBI" id="CHEBI:58766"/>
        <dbReference type="EC" id="1.1.1.290"/>
    </reaction>
</comment>
<comment type="pathway">
    <text evidence="1">Cofactor biosynthesis; pyridoxine 5'-phosphate biosynthesis; pyridoxine 5'-phosphate from D-erythrose 4-phosphate: step 2/5.</text>
</comment>
<comment type="subunit">
    <text evidence="1">Homodimer.</text>
</comment>
<comment type="subcellular location">
    <subcellularLocation>
        <location evidence="1">Cytoplasm</location>
    </subcellularLocation>
</comment>
<comment type="similarity">
    <text evidence="1">Belongs to the D-isomer specific 2-hydroxyacid dehydrogenase family. PdxB subfamily.</text>
</comment>
<sequence length="387" mass="43147">MKILADENMPYVQELFGDLGTIETVNGRELTPEQVKDADVLLVRSVTQVNGSLLSLNNKLKFVGSATIGTDHIDTDYLASRDIPFSNAPGCNATAVGEFAFIAMLELANRFGGKLKDKTVGIVGAGNTGSAVAKCLQAYGVTVLLHDPVIQDSDPRDFISLDELIARCDVISLHVPIIKTGEHKTWYLFDETRLNSLKPGTWLLNCCRGEVIDNRALIKVKQQRPDIKLVLDVWEGEPNPMHELIPLVELATPHIAGYSLEGKARGTYMLYQKLMQVLGRDADKSMTTLLPSLWSVQLDIESIPNEKSLLKLARFIYDLRDDDELFRKTILDDSSKNDQVNCVNNNGFDLMRKNHQHRREFRALRLVNTGHSDVNWLTNLGFSGVGQ</sequence>
<feature type="chain" id="PRO_0000075989" description="Erythronate-4-phosphate dehydrogenase">
    <location>
        <begin position="1"/>
        <end position="387"/>
    </location>
</feature>
<feature type="active site" evidence="1">
    <location>
        <position position="208"/>
    </location>
</feature>
<feature type="active site" evidence="1">
    <location>
        <position position="237"/>
    </location>
</feature>
<feature type="active site" description="Proton donor" evidence="1">
    <location>
        <position position="254"/>
    </location>
</feature>
<feature type="binding site" evidence="1">
    <location>
        <position position="45"/>
    </location>
    <ligand>
        <name>substrate</name>
    </ligand>
</feature>
<feature type="binding site" evidence="1">
    <location>
        <position position="67"/>
    </location>
    <ligand>
        <name>substrate</name>
    </ligand>
</feature>
<feature type="binding site" evidence="1">
    <location>
        <position position="147"/>
    </location>
    <ligand>
        <name>NAD(+)</name>
        <dbReference type="ChEBI" id="CHEBI:57540"/>
    </ligand>
</feature>
<feature type="binding site" evidence="1">
    <location>
        <position position="232"/>
    </location>
    <ligand>
        <name>NAD(+)</name>
        <dbReference type="ChEBI" id="CHEBI:57540"/>
    </ligand>
</feature>
<feature type="binding site" evidence="1">
    <location>
        <position position="257"/>
    </location>
    <ligand>
        <name>NAD(+)</name>
        <dbReference type="ChEBI" id="CHEBI:57540"/>
    </ligand>
</feature>
<feature type="binding site" evidence="1">
    <location>
        <position position="258"/>
    </location>
    <ligand>
        <name>substrate</name>
    </ligand>
</feature>
<feature type="sequence conflict" description="In Ref. 2; BAA08489." evidence="2" ref="2">
    <original>S</original>
    <variation>P</variation>
    <location>
        <position position="302"/>
    </location>
</feature>
<feature type="sequence conflict" description="In Ref. 2; BAA08489." evidence="2" ref="2">
    <original>D</original>
    <variation>G</variation>
    <location>
        <position position="322"/>
    </location>
</feature>
<feature type="sequence conflict" description="In Ref. 2; BAA08489." evidence="2" ref="2">
    <original>K</original>
    <variation>E</variation>
    <location>
        <position position="328"/>
    </location>
</feature>